<dbReference type="EC" id="1.1.1.284"/>
<dbReference type="EC" id="1.1.1.1"/>
<dbReference type="EC" id="1.1.1.-"/>
<dbReference type="EMBL" id="CP000243">
    <property type="protein sequence ID" value="ABE05877.1"/>
    <property type="molecule type" value="Genomic_DNA"/>
</dbReference>
<dbReference type="RefSeq" id="WP_000842109.1">
    <property type="nucleotide sequence ID" value="NZ_CP064825.1"/>
</dbReference>
<dbReference type="SMR" id="Q1RFI7"/>
<dbReference type="KEGG" id="eci:UTI89_C0376"/>
<dbReference type="HOGENOM" id="CLU_026673_14_0_6"/>
<dbReference type="Proteomes" id="UP000001952">
    <property type="component" value="Chromosome"/>
</dbReference>
<dbReference type="GO" id="GO:0005829">
    <property type="term" value="C:cytosol"/>
    <property type="evidence" value="ECO:0007669"/>
    <property type="project" value="TreeGrafter"/>
</dbReference>
<dbReference type="GO" id="GO:0004022">
    <property type="term" value="F:alcohol dehydrogenase (NAD+) activity"/>
    <property type="evidence" value="ECO:0007669"/>
    <property type="project" value="UniProtKB-EC"/>
</dbReference>
<dbReference type="GO" id="GO:0106322">
    <property type="term" value="F:S-(hydroxymethyl)glutathione dehydrogenase (NAD+) activity"/>
    <property type="evidence" value="ECO:0007669"/>
    <property type="project" value="RHEA"/>
</dbReference>
<dbReference type="GO" id="GO:0106321">
    <property type="term" value="F:S-(hydroxymethyl)glutathione dehydrogenase (NADP+) activity"/>
    <property type="evidence" value="ECO:0007669"/>
    <property type="project" value="RHEA"/>
</dbReference>
<dbReference type="GO" id="GO:0080007">
    <property type="term" value="F:S-nitrosoglutathione reductase (NADH) activity"/>
    <property type="evidence" value="ECO:0007669"/>
    <property type="project" value="RHEA"/>
</dbReference>
<dbReference type="GO" id="GO:0008270">
    <property type="term" value="F:zinc ion binding"/>
    <property type="evidence" value="ECO:0007669"/>
    <property type="project" value="InterPro"/>
</dbReference>
<dbReference type="GO" id="GO:0046294">
    <property type="term" value="P:formaldehyde catabolic process"/>
    <property type="evidence" value="ECO:0007669"/>
    <property type="project" value="InterPro"/>
</dbReference>
<dbReference type="CDD" id="cd08300">
    <property type="entry name" value="alcohol_DH_class_III"/>
    <property type="match status" value="1"/>
</dbReference>
<dbReference type="FunFam" id="3.40.50.720:FF:000003">
    <property type="entry name" value="S-(hydroxymethyl)glutathione dehydrogenase"/>
    <property type="match status" value="1"/>
</dbReference>
<dbReference type="FunFam" id="3.90.180.10:FF:000001">
    <property type="entry name" value="S-(hydroxymethyl)glutathione dehydrogenase"/>
    <property type="match status" value="1"/>
</dbReference>
<dbReference type="Gene3D" id="3.90.180.10">
    <property type="entry name" value="Medium-chain alcohol dehydrogenases, catalytic domain"/>
    <property type="match status" value="1"/>
</dbReference>
<dbReference type="Gene3D" id="3.40.50.720">
    <property type="entry name" value="NAD(P)-binding Rossmann-like Domain"/>
    <property type="match status" value="1"/>
</dbReference>
<dbReference type="InterPro" id="IPR013149">
    <property type="entry name" value="ADH-like_C"/>
</dbReference>
<dbReference type="InterPro" id="IPR013154">
    <property type="entry name" value="ADH-like_N"/>
</dbReference>
<dbReference type="InterPro" id="IPR014183">
    <property type="entry name" value="ADH_3"/>
</dbReference>
<dbReference type="InterPro" id="IPR002328">
    <property type="entry name" value="ADH_Zn_CS"/>
</dbReference>
<dbReference type="InterPro" id="IPR011032">
    <property type="entry name" value="GroES-like_sf"/>
</dbReference>
<dbReference type="InterPro" id="IPR036291">
    <property type="entry name" value="NAD(P)-bd_dom_sf"/>
</dbReference>
<dbReference type="InterPro" id="IPR020843">
    <property type="entry name" value="PKS_ER"/>
</dbReference>
<dbReference type="NCBIfam" id="TIGR02818">
    <property type="entry name" value="adh_III_F_hyde"/>
    <property type="match status" value="1"/>
</dbReference>
<dbReference type="PANTHER" id="PTHR43880">
    <property type="entry name" value="ALCOHOL DEHYDROGENASE"/>
    <property type="match status" value="1"/>
</dbReference>
<dbReference type="PANTHER" id="PTHR43880:SF12">
    <property type="entry name" value="ALCOHOL DEHYDROGENASE CLASS-3"/>
    <property type="match status" value="1"/>
</dbReference>
<dbReference type="Pfam" id="PF08240">
    <property type="entry name" value="ADH_N"/>
    <property type="match status" value="1"/>
</dbReference>
<dbReference type="Pfam" id="PF00107">
    <property type="entry name" value="ADH_zinc_N"/>
    <property type="match status" value="1"/>
</dbReference>
<dbReference type="SMART" id="SM00829">
    <property type="entry name" value="PKS_ER"/>
    <property type="match status" value="1"/>
</dbReference>
<dbReference type="SUPFAM" id="SSF50129">
    <property type="entry name" value="GroES-like"/>
    <property type="match status" value="2"/>
</dbReference>
<dbReference type="SUPFAM" id="SSF51735">
    <property type="entry name" value="NAD(P)-binding Rossmann-fold domains"/>
    <property type="match status" value="1"/>
</dbReference>
<dbReference type="PROSITE" id="PS00059">
    <property type="entry name" value="ADH_ZINC"/>
    <property type="match status" value="1"/>
</dbReference>
<protein>
    <recommendedName>
        <fullName>S-(hydroxymethyl)glutathione dehydrogenase</fullName>
        <ecNumber>1.1.1.284</ecNumber>
    </recommendedName>
    <alternativeName>
        <fullName>Alcohol dehydrogenase class-3</fullName>
        <ecNumber>1.1.1.1</ecNumber>
    </alternativeName>
    <alternativeName>
        <fullName>Alcohol dehydrogenase class-III</fullName>
    </alternativeName>
    <alternativeName>
        <fullName>Glutathione-dependent formaldehyde dehydrogenase</fullName>
        <shortName>FALDH</shortName>
        <shortName>FDH</shortName>
        <shortName>GSH-FDH</shortName>
        <ecNumber>1.1.1.-</ecNumber>
    </alternativeName>
</protein>
<name>FRMA_ECOUT</name>
<reference key="1">
    <citation type="journal article" date="2006" name="Proc. Natl. Acad. Sci. U.S.A.">
        <title>Identification of genes subject to positive selection in uropathogenic strains of Escherichia coli: a comparative genomics approach.</title>
        <authorList>
            <person name="Chen S.L."/>
            <person name="Hung C.-S."/>
            <person name="Xu J."/>
            <person name="Reigstad C.S."/>
            <person name="Magrini V."/>
            <person name="Sabo A."/>
            <person name="Blasiar D."/>
            <person name="Bieri T."/>
            <person name="Meyer R.R."/>
            <person name="Ozersky P."/>
            <person name="Armstrong J.R."/>
            <person name="Fulton R.S."/>
            <person name="Latreille J.P."/>
            <person name="Spieth J."/>
            <person name="Hooton T.M."/>
            <person name="Mardis E.R."/>
            <person name="Hultgren S.J."/>
            <person name="Gordon J.I."/>
        </authorList>
    </citation>
    <scope>NUCLEOTIDE SEQUENCE [LARGE SCALE GENOMIC DNA]</scope>
    <source>
        <strain>UTI89 / UPEC</strain>
    </source>
</reference>
<evidence type="ECO:0000250" key="1">
    <source>
        <dbReference type="UniProtKB" id="P11766"/>
    </source>
</evidence>
<evidence type="ECO:0000250" key="2">
    <source>
        <dbReference type="UniProtKB" id="P25437"/>
    </source>
</evidence>
<evidence type="ECO:0000305" key="3"/>
<keyword id="KW-0963">Cytoplasm</keyword>
<keyword id="KW-0479">Metal-binding</keyword>
<keyword id="KW-0520">NAD</keyword>
<keyword id="KW-0560">Oxidoreductase</keyword>
<keyword id="KW-0862">Zinc</keyword>
<comment type="function">
    <text evidence="2">Has high formaldehyde dehydrogenase activity in the presence of glutathione and catalyzes the oxidation of normal alcohols in a reaction that is not GSH-dependent. In addition, hemithiolacetals other than those formed from GSH, including omega-thiol fatty acids, also are substrates. Also acts as a S-nitroso-glutathione reductase by catalyzing the NADH-dependent reduction of S-nitrosoglutathione.</text>
</comment>
<comment type="catalytic activity">
    <reaction evidence="2">
        <text>S-(hydroxymethyl)glutathione + NADP(+) = S-formylglutathione + NADPH + H(+)</text>
        <dbReference type="Rhea" id="RHEA:19981"/>
        <dbReference type="ChEBI" id="CHEBI:15378"/>
        <dbReference type="ChEBI" id="CHEBI:57688"/>
        <dbReference type="ChEBI" id="CHEBI:57783"/>
        <dbReference type="ChEBI" id="CHEBI:58349"/>
        <dbReference type="ChEBI" id="CHEBI:58758"/>
        <dbReference type="EC" id="1.1.1.284"/>
    </reaction>
</comment>
<comment type="catalytic activity">
    <reaction evidence="2">
        <text>S-(hydroxymethyl)glutathione + NAD(+) = S-formylglutathione + NADH + H(+)</text>
        <dbReference type="Rhea" id="RHEA:19985"/>
        <dbReference type="ChEBI" id="CHEBI:15378"/>
        <dbReference type="ChEBI" id="CHEBI:57540"/>
        <dbReference type="ChEBI" id="CHEBI:57688"/>
        <dbReference type="ChEBI" id="CHEBI:57945"/>
        <dbReference type="ChEBI" id="CHEBI:58758"/>
        <dbReference type="EC" id="1.1.1.284"/>
    </reaction>
</comment>
<comment type="catalytic activity">
    <reaction evidence="2">
        <text>a primary alcohol + NAD(+) = an aldehyde + NADH + H(+)</text>
        <dbReference type="Rhea" id="RHEA:10736"/>
        <dbReference type="ChEBI" id="CHEBI:15378"/>
        <dbReference type="ChEBI" id="CHEBI:15734"/>
        <dbReference type="ChEBI" id="CHEBI:17478"/>
        <dbReference type="ChEBI" id="CHEBI:57540"/>
        <dbReference type="ChEBI" id="CHEBI:57945"/>
        <dbReference type="EC" id="1.1.1.1"/>
    </reaction>
</comment>
<comment type="catalytic activity">
    <reaction evidence="2">
        <text>a secondary alcohol + NAD(+) = a ketone + NADH + H(+)</text>
        <dbReference type="Rhea" id="RHEA:10740"/>
        <dbReference type="ChEBI" id="CHEBI:15378"/>
        <dbReference type="ChEBI" id="CHEBI:17087"/>
        <dbReference type="ChEBI" id="CHEBI:35681"/>
        <dbReference type="ChEBI" id="CHEBI:57540"/>
        <dbReference type="ChEBI" id="CHEBI:57945"/>
        <dbReference type="EC" id="1.1.1.1"/>
    </reaction>
</comment>
<comment type="catalytic activity">
    <reaction evidence="2">
        <text>S-nitrosoglutathione + NADH + H(+) = S-(hydroxysulfenamide)glutathione + NAD(+)</text>
        <dbReference type="Rhea" id="RHEA:78371"/>
        <dbReference type="ChEBI" id="CHEBI:15378"/>
        <dbReference type="ChEBI" id="CHEBI:57540"/>
        <dbReference type="ChEBI" id="CHEBI:57945"/>
        <dbReference type="ChEBI" id="CHEBI:145544"/>
        <dbReference type="ChEBI" id="CHEBI:229723"/>
    </reaction>
    <physiologicalReaction direction="left-to-right" evidence="2">
        <dbReference type="Rhea" id="RHEA:78372"/>
    </physiologicalReaction>
</comment>
<comment type="cofactor">
    <cofactor evidence="1">
        <name>Zn(2+)</name>
        <dbReference type="ChEBI" id="CHEBI:29105"/>
    </cofactor>
    <text evidence="1">Binds 2 Zn(2+) ions per subunit.</text>
</comment>
<comment type="subunit">
    <text evidence="2">Homodimer.</text>
</comment>
<comment type="subcellular location">
    <subcellularLocation>
        <location evidence="2">Cytoplasm</location>
    </subcellularLocation>
</comment>
<comment type="similarity">
    <text evidence="3">Belongs to the zinc-containing alcohol dehydrogenase family. Class-III subfamily.</text>
</comment>
<organism>
    <name type="scientific">Escherichia coli (strain UTI89 / UPEC)</name>
    <dbReference type="NCBI Taxonomy" id="364106"/>
    <lineage>
        <taxon>Bacteria</taxon>
        <taxon>Pseudomonadati</taxon>
        <taxon>Pseudomonadota</taxon>
        <taxon>Gammaproteobacteria</taxon>
        <taxon>Enterobacterales</taxon>
        <taxon>Enterobacteriaceae</taxon>
        <taxon>Escherichia</taxon>
    </lineage>
</organism>
<gene>
    <name type="primary">frmA</name>
    <name type="ordered locus">UTI89_C0376</name>
</gene>
<feature type="chain" id="PRO_0000341285" description="S-(hydroxymethyl)glutathione dehydrogenase">
    <location>
        <begin position="1"/>
        <end position="369"/>
    </location>
</feature>
<feature type="binding site" evidence="1">
    <location>
        <position position="40"/>
    </location>
    <ligand>
        <name>Zn(2+)</name>
        <dbReference type="ChEBI" id="CHEBI:29105"/>
        <label>1</label>
        <note>catalytic</note>
    </ligand>
</feature>
<feature type="binding site" evidence="1">
    <location>
        <position position="62"/>
    </location>
    <ligand>
        <name>Zn(2+)</name>
        <dbReference type="ChEBI" id="CHEBI:29105"/>
        <label>1</label>
        <note>catalytic</note>
    </ligand>
</feature>
<feature type="binding site" evidence="1">
    <location>
        <position position="92"/>
    </location>
    <ligand>
        <name>Zn(2+)</name>
        <dbReference type="ChEBI" id="CHEBI:29105"/>
        <label>2</label>
    </ligand>
</feature>
<feature type="binding site" evidence="1">
    <location>
        <position position="95"/>
    </location>
    <ligand>
        <name>Zn(2+)</name>
        <dbReference type="ChEBI" id="CHEBI:29105"/>
        <label>2</label>
    </ligand>
</feature>
<feature type="binding site" evidence="1">
    <location>
        <position position="98"/>
    </location>
    <ligand>
        <name>Zn(2+)</name>
        <dbReference type="ChEBI" id="CHEBI:29105"/>
        <label>2</label>
    </ligand>
</feature>
<feature type="binding site" evidence="1">
    <location>
        <position position="106"/>
    </location>
    <ligand>
        <name>Zn(2+)</name>
        <dbReference type="ChEBI" id="CHEBI:29105"/>
        <label>2</label>
    </ligand>
</feature>
<feature type="binding site" evidence="1">
    <location>
        <position position="169"/>
    </location>
    <ligand>
        <name>Zn(2+)</name>
        <dbReference type="ChEBI" id="CHEBI:29105"/>
        <label>1</label>
        <note>catalytic</note>
    </ligand>
</feature>
<accession>Q1RFI7</accession>
<proteinExistence type="inferred from homology"/>
<sequence length="369" mass="39347">MKSRAAVAFAPGKPLEIVEIDVAPPKKGEVLIKVTHTGVCHTDAFTLSGDDPEGVFPVVLGHEGAGVVVEVGEGVTSVKPGDHVIPLYTAECGECEFCRSGKTNLCVAVRETQGKGLMPDGTTRFSYNGQPLYHYMGCSTFSEYTVVAEVSLAKINPEANHEHVCLLGCGVTTGIGAVHNTAKVQPGDSVAVFGLGAIGLAVVQGARQAKAGRIIAIDTNPKKFELARRFGATDCINPNDYDKPIKDVLLDINKWGIDHTFECIGNVNVMRAALESAHRGWGQSVIIGVAGSGQEISTRPFQLVTGRVWKGSAFGGVKGRSQLPGMVEDAMKGDIDLEPFVTHTMSLDEINDAFDLMHEGKSIRTVIRY</sequence>